<reference key="1">
    <citation type="journal article" date="2006" name="BMC Genomics">
        <title>The genome of the square archaeon Haloquadratum walsbyi: life at the limits of water activity.</title>
        <authorList>
            <person name="Bolhuis H."/>
            <person name="Palm P."/>
            <person name="Wende A."/>
            <person name="Falb M."/>
            <person name="Rampp M."/>
            <person name="Rodriguez-Valera F."/>
            <person name="Pfeiffer F."/>
            <person name="Oesterhelt D."/>
        </authorList>
    </citation>
    <scope>NUCLEOTIDE SEQUENCE [LARGE SCALE GENOMIC DNA]</scope>
    <source>
        <strain>DSM 16790 / HBSQ001</strain>
    </source>
</reference>
<dbReference type="EC" id="4.2.1.11" evidence="1"/>
<dbReference type="EMBL" id="AM180088">
    <property type="protein sequence ID" value="CAJ53039.1"/>
    <property type="molecule type" value="Genomic_DNA"/>
</dbReference>
<dbReference type="RefSeq" id="WP_011572149.1">
    <property type="nucleotide sequence ID" value="NC_008212.1"/>
</dbReference>
<dbReference type="SMR" id="Q18G62"/>
<dbReference type="STRING" id="362976.HQ_2935A"/>
<dbReference type="GeneID" id="4193958"/>
<dbReference type="KEGG" id="hwa:HQ_2935A"/>
<dbReference type="eggNOG" id="arCOG01169">
    <property type="taxonomic scope" value="Archaea"/>
</dbReference>
<dbReference type="HOGENOM" id="CLU_031223_0_1_2"/>
<dbReference type="UniPathway" id="UPA00109">
    <property type="reaction ID" value="UER00187"/>
</dbReference>
<dbReference type="Proteomes" id="UP000001975">
    <property type="component" value="Chromosome"/>
</dbReference>
<dbReference type="GO" id="GO:0009986">
    <property type="term" value="C:cell surface"/>
    <property type="evidence" value="ECO:0007669"/>
    <property type="project" value="UniProtKB-SubCell"/>
</dbReference>
<dbReference type="GO" id="GO:0005576">
    <property type="term" value="C:extracellular region"/>
    <property type="evidence" value="ECO:0007669"/>
    <property type="project" value="UniProtKB-SubCell"/>
</dbReference>
<dbReference type="GO" id="GO:0000015">
    <property type="term" value="C:phosphopyruvate hydratase complex"/>
    <property type="evidence" value="ECO:0007669"/>
    <property type="project" value="InterPro"/>
</dbReference>
<dbReference type="GO" id="GO:0000287">
    <property type="term" value="F:magnesium ion binding"/>
    <property type="evidence" value="ECO:0007669"/>
    <property type="project" value="UniProtKB-UniRule"/>
</dbReference>
<dbReference type="GO" id="GO:0004634">
    <property type="term" value="F:phosphopyruvate hydratase activity"/>
    <property type="evidence" value="ECO:0007669"/>
    <property type="project" value="UniProtKB-UniRule"/>
</dbReference>
<dbReference type="GO" id="GO:0006096">
    <property type="term" value="P:glycolytic process"/>
    <property type="evidence" value="ECO:0007669"/>
    <property type="project" value="UniProtKB-UniRule"/>
</dbReference>
<dbReference type="CDD" id="cd03313">
    <property type="entry name" value="enolase"/>
    <property type="match status" value="1"/>
</dbReference>
<dbReference type="Gene3D" id="3.20.20.120">
    <property type="entry name" value="Enolase-like C-terminal domain"/>
    <property type="match status" value="1"/>
</dbReference>
<dbReference type="Gene3D" id="3.30.390.10">
    <property type="entry name" value="Enolase-like, N-terminal domain"/>
    <property type="match status" value="1"/>
</dbReference>
<dbReference type="HAMAP" id="MF_00318">
    <property type="entry name" value="Enolase"/>
    <property type="match status" value="1"/>
</dbReference>
<dbReference type="InterPro" id="IPR000941">
    <property type="entry name" value="Enolase"/>
</dbReference>
<dbReference type="InterPro" id="IPR036849">
    <property type="entry name" value="Enolase-like_C_sf"/>
</dbReference>
<dbReference type="InterPro" id="IPR029017">
    <property type="entry name" value="Enolase-like_N"/>
</dbReference>
<dbReference type="InterPro" id="IPR020810">
    <property type="entry name" value="Enolase_C"/>
</dbReference>
<dbReference type="InterPro" id="IPR020809">
    <property type="entry name" value="Enolase_CS"/>
</dbReference>
<dbReference type="InterPro" id="IPR020811">
    <property type="entry name" value="Enolase_N"/>
</dbReference>
<dbReference type="NCBIfam" id="TIGR01060">
    <property type="entry name" value="eno"/>
    <property type="match status" value="1"/>
</dbReference>
<dbReference type="PANTHER" id="PTHR11902">
    <property type="entry name" value="ENOLASE"/>
    <property type="match status" value="1"/>
</dbReference>
<dbReference type="PANTHER" id="PTHR11902:SF1">
    <property type="entry name" value="ENOLASE"/>
    <property type="match status" value="1"/>
</dbReference>
<dbReference type="Pfam" id="PF00113">
    <property type="entry name" value="Enolase_C"/>
    <property type="match status" value="1"/>
</dbReference>
<dbReference type="Pfam" id="PF03952">
    <property type="entry name" value="Enolase_N"/>
    <property type="match status" value="1"/>
</dbReference>
<dbReference type="PIRSF" id="PIRSF001400">
    <property type="entry name" value="Enolase"/>
    <property type="match status" value="1"/>
</dbReference>
<dbReference type="PRINTS" id="PR00148">
    <property type="entry name" value="ENOLASE"/>
</dbReference>
<dbReference type="SFLD" id="SFLDS00001">
    <property type="entry name" value="Enolase"/>
    <property type="match status" value="1"/>
</dbReference>
<dbReference type="SFLD" id="SFLDF00002">
    <property type="entry name" value="enolase"/>
    <property type="match status" value="1"/>
</dbReference>
<dbReference type="SMART" id="SM01192">
    <property type="entry name" value="Enolase_C"/>
    <property type="match status" value="1"/>
</dbReference>
<dbReference type="SMART" id="SM01193">
    <property type="entry name" value="Enolase_N"/>
    <property type="match status" value="1"/>
</dbReference>
<dbReference type="SUPFAM" id="SSF51604">
    <property type="entry name" value="Enolase C-terminal domain-like"/>
    <property type="match status" value="1"/>
</dbReference>
<dbReference type="SUPFAM" id="SSF54826">
    <property type="entry name" value="Enolase N-terminal domain-like"/>
    <property type="match status" value="1"/>
</dbReference>
<dbReference type="PROSITE" id="PS00164">
    <property type="entry name" value="ENOLASE"/>
    <property type="match status" value="1"/>
</dbReference>
<accession>Q18G62</accession>
<keyword id="KW-0963">Cytoplasm</keyword>
<keyword id="KW-0324">Glycolysis</keyword>
<keyword id="KW-0456">Lyase</keyword>
<keyword id="KW-0460">Magnesium</keyword>
<keyword id="KW-0479">Metal-binding</keyword>
<keyword id="KW-1185">Reference proteome</keyword>
<keyword id="KW-0964">Secreted</keyword>
<gene>
    <name evidence="1" type="primary">eno</name>
    <name type="ordered locus">HQ_2935A</name>
</gene>
<organism>
    <name type="scientific">Haloquadratum walsbyi (strain DSM 16790 / HBSQ001)</name>
    <dbReference type="NCBI Taxonomy" id="362976"/>
    <lineage>
        <taxon>Archaea</taxon>
        <taxon>Methanobacteriati</taxon>
        <taxon>Methanobacteriota</taxon>
        <taxon>Stenosarchaea group</taxon>
        <taxon>Halobacteria</taxon>
        <taxon>Halobacteriales</taxon>
        <taxon>Haloferacaceae</taxon>
        <taxon>Haloquadratum</taxon>
    </lineage>
</organism>
<feature type="chain" id="PRO_0000267140" description="Enolase">
    <location>
        <begin position="1"/>
        <end position="401"/>
    </location>
</feature>
<feature type="active site" description="Proton donor" evidence="1">
    <location>
        <position position="196"/>
    </location>
</feature>
<feature type="active site" description="Proton acceptor" evidence="1">
    <location>
        <position position="327"/>
    </location>
</feature>
<feature type="binding site" evidence="1">
    <location>
        <position position="154"/>
    </location>
    <ligand>
        <name>(2R)-2-phosphoglycerate</name>
        <dbReference type="ChEBI" id="CHEBI:58289"/>
    </ligand>
</feature>
<feature type="binding site" evidence="1">
    <location>
        <position position="232"/>
    </location>
    <ligand>
        <name>Mg(2+)</name>
        <dbReference type="ChEBI" id="CHEBI:18420"/>
    </ligand>
</feature>
<feature type="binding site" evidence="1">
    <location>
        <position position="275"/>
    </location>
    <ligand>
        <name>Mg(2+)</name>
        <dbReference type="ChEBI" id="CHEBI:18420"/>
    </ligand>
</feature>
<feature type="binding site" evidence="1">
    <location>
        <position position="302"/>
    </location>
    <ligand>
        <name>Mg(2+)</name>
        <dbReference type="ChEBI" id="CHEBI:18420"/>
    </ligand>
</feature>
<feature type="binding site" evidence="1">
    <location>
        <position position="327"/>
    </location>
    <ligand>
        <name>(2R)-2-phosphoglycerate</name>
        <dbReference type="ChEBI" id="CHEBI:58289"/>
    </ligand>
</feature>
<feature type="binding site" evidence="1">
    <location>
        <position position="356"/>
    </location>
    <ligand>
        <name>(2R)-2-phosphoglycerate</name>
        <dbReference type="ChEBI" id="CHEBI:58289"/>
    </ligand>
</feature>
<feature type="binding site" evidence="1">
    <location>
        <position position="357"/>
    </location>
    <ligand>
        <name>(2R)-2-phosphoglycerate</name>
        <dbReference type="ChEBI" id="CHEBI:58289"/>
    </ligand>
</feature>
<feature type="binding site" evidence="1">
    <location>
        <position position="378"/>
    </location>
    <ligand>
        <name>(2R)-2-phosphoglycerate</name>
        <dbReference type="ChEBI" id="CHEBI:58289"/>
    </ligand>
</feature>
<comment type="function">
    <text evidence="1">Catalyzes the reversible conversion of 2-phosphoglycerate (2-PG) into phosphoenolpyruvate (PEP). It is essential for the degradation of carbohydrates via glycolysis.</text>
</comment>
<comment type="catalytic activity">
    <reaction evidence="1">
        <text>(2R)-2-phosphoglycerate = phosphoenolpyruvate + H2O</text>
        <dbReference type="Rhea" id="RHEA:10164"/>
        <dbReference type="ChEBI" id="CHEBI:15377"/>
        <dbReference type="ChEBI" id="CHEBI:58289"/>
        <dbReference type="ChEBI" id="CHEBI:58702"/>
        <dbReference type="EC" id="4.2.1.11"/>
    </reaction>
</comment>
<comment type="cofactor">
    <cofactor evidence="1">
        <name>Mg(2+)</name>
        <dbReference type="ChEBI" id="CHEBI:18420"/>
    </cofactor>
    <text evidence="1">Binds a second Mg(2+) ion via substrate during catalysis.</text>
</comment>
<comment type="pathway">
    <text evidence="1">Carbohydrate degradation; glycolysis; pyruvate from D-glyceraldehyde 3-phosphate: step 4/5.</text>
</comment>
<comment type="subcellular location">
    <subcellularLocation>
        <location evidence="1">Cytoplasm</location>
    </subcellularLocation>
    <subcellularLocation>
        <location evidence="1">Secreted</location>
    </subcellularLocation>
    <subcellularLocation>
        <location evidence="1">Cell surface</location>
    </subcellularLocation>
    <text evidence="1">Fractions of enolase are present in both the cytoplasm and on the cell surface.</text>
</comment>
<comment type="similarity">
    <text evidence="1">Belongs to the enolase family.</text>
</comment>
<proteinExistence type="inferred from homology"/>
<name>ENO_HALWD</name>
<protein>
    <recommendedName>
        <fullName evidence="1">Enolase</fullName>
        <ecNumber evidence="1">4.2.1.11</ecNumber>
    </recommendedName>
    <alternativeName>
        <fullName evidence="1">2-phospho-D-glycerate hydro-lyase</fullName>
    </alternativeName>
    <alternativeName>
        <fullName evidence="1">2-phosphoglycerate dehydratase</fullName>
    </alternativeName>
</protein>
<evidence type="ECO:0000255" key="1">
    <source>
        <dbReference type="HAMAP-Rule" id="MF_00318"/>
    </source>
</evidence>
<sequence length="401" mass="42173">MTQITNVSLRRILDSRGNPTVEADVLTQSGGFGRAAAPSGASTGEYEAIELDPAEAIASARDHVAPRLIDTVHAGNQREVDAALHAADGTDNFSQIGANSAVAISMAAAKAGADVLGAPVYQHLGGTFRGESFPTPLGNVVGGGEHAKEATHIQEFLSAPIGAPNVSEAVFANAAVHARVSEILDERGIPAAKGDEGAWAPPISDAEAFSLVNDAVADVEDDLGFEIRFGLDMAAAELYDDDVGGYVYGDEVKSTTEQVEYVAEMIAEYNLVYVEDPLDENDYDGFATLTERVGDQTLICGDDLFVTSVERLQTGIDADAANSILIKPNQIGTLTDAFDAIELAREHGYETVVSHRSGETEDVTIAHLAVATDAGFIKTGTVQGERTAKLNELIRIAEDAV</sequence>